<comment type="function">
    <text evidence="1">Catalyzes the transfer of CoA to carnitine, generating the initial carnitinyl-CoA needed for the CaiB reaction cycle. Also has activity toward crotonobetaine and gamma-butyrobetaine.</text>
</comment>
<comment type="catalytic activity">
    <reaction evidence="1">
        <text>4-(trimethylamino)butanoate + ATP + CoA = 4-(trimethylamino)butanoyl-CoA + AMP + diphosphate</text>
        <dbReference type="Rhea" id="RHEA:55960"/>
        <dbReference type="ChEBI" id="CHEBI:16244"/>
        <dbReference type="ChEBI" id="CHEBI:30616"/>
        <dbReference type="ChEBI" id="CHEBI:33019"/>
        <dbReference type="ChEBI" id="CHEBI:57287"/>
        <dbReference type="ChEBI" id="CHEBI:61513"/>
        <dbReference type="ChEBI" id="CHEBI:456215"/>
        <dbReference type="EC" id="6.2.1.48"/>
    </reaction>
</comment>
<comment type="catalytic activity">
    <reaction evidence="1">
        <text>crotonobetaine + ATP + CoA = crotonobetainyl-CoA + AMP + diphosphate</text>
        <dbReference type="Rhea" id="RHEA:30079"/>
        <dbReference type="ChEBI" id="CHEBI:17237"/>
        <dbReference type="ChEBI" id="CHEBI:30616"/>
        <dbReference type="ChEBI" id="CHEBI:33019"/>
        <dbReference type="ChEBI" id="CHEBI:57287"/>
        <dbReference type="ChEBI" id="CHEBI:60933"/>
        <dbReference type="ChEBI" id="CHEBI:456215"/>
        <dbReference type="EC" id="6.2.1.48"/>
    </reaction>
</comment>
<comment type="catalytic activity">
    <reaction evidence="1">
        <text>(R)-carnitine + ATP + CoA = (R)-carnitinyl-CoA + AMP + diphosphate</text>
        <dbReference type="Rhea" id="RHEA:28514"/>
        <dbReference type="ChEBI" id="CHEBI:16347"/>
        <dbReference type="ChEBI" id="CHEBI:30616"/>
        <dbReference type="ChEBI" id="CHEBI:33019"/>
        <dbReference type="ChEBI" id="CHEBI:57287"/>
        <dbReference type="ChEBI" id="CHEBI:60932"/>
        <dbReference type="ChEBI" id="CHEBI:456215"/>
        <dbReference type="EC" id="6.2.1.48"/>
    </reaction>
</comment>
<comment type="pathway">
    <text evidence="1">Amine and polyamine metabolism; carnitine metabolism.</text>
</comment>
<comment type="similarity">
    <text evidence="1">Belongs to the ATP-dependent AMP-binding enzyme family.</text>
</comment>
<comment type="sequence caution" evidence="2">
    <conflict type="erroneous initiation">
        <sequence resource="EMBL-CDS" id="CAR01406"/>
    </conflict>
</comment>
<accession>B7MAG0</accession>
<sequence>MDIIGGQHLRQMWDDLADVYGHKTALICESSGGVVNRYSYLELNQEINRTANLFYTLGIRKGDKVALHLDNCPEFIFCWFGLAKIGAIMVPINARLLREESTWILQNSQACLLVTSAQFYPMYQQIQQEDASQLRHICLIDMALPADDGVSSFTQLKNQQPATLCYAPPLSTDDTAEILFTSGTTSRPKGVVITHYNLRFAGYYSAWQCALRDDDVYLTVMPAFHIDCQCTAAMAAFSAGATFVLVEKYSARAFWGQVQKYRATITECIPMMIRTLMVQPPSANDRQHRLREVMFYLNLSEQEKDAFCERFGVSLLTSYGMTETIVGIIGDRPGDKRRWPSIGRAGFCYEAEIRDDHNRPLPAGELGEICIKGVPGKTIFKEYFLNPKATAKVLEADGWLHTGDTGYRDEEGFFYFVDRRCNMIKRGGENVSCVELENIIATHPKIQDIVVVGIKDSIRDEAIKAFVVLNEGETLSEEEFFCFCEQNMAKFKVPSYLEIRKDLPRNCSGKIIRKNLK</sequence>
<gene>
    <name evidence="1" type="primary">caiC</name>
    <name type="ordered locus">ECS88_0040</name>
</gene>
<feature type="chain" id="PRO_0000383399" description="Crotonobetaine/carnitine--CoA ligase">
    <location>
        <begin position="1"/>
        <end position="517"/>
    </location>
</feature>
<keyword id="KW-0436">Ligase</keyword>
<keyword id="KW-1185">Reference proteome</keyword>
<evidence type="ECO:0000255" key="1">
    <source>
        <dbReference type="HAMAP-Rule" id="MF_01524"/>
    </source>
</evidence>
<evidence type="ECO:0000305" key="2"/>
<proteinExistence type="inferred from homology"/>
<dbReference type="EC" id="6.2.1.48" evidence="1"/>
<dbReference type="EMBL" id="CU928161">
    <property type="protein sequence ID" value="CAR01406.1"/>
    <property type="status" value="ALT_INIT"/>
    <property type="molecule type" value="Genomic_DNA"/>
</dbReference>
<dbReference type="RefSeq" id="WP_001514435.1">
    <property type="nucleotide sequence ID" value="NC_011742.1"/>
</dbReference>
<dbReference type="SMR" id="B7MAG0"/>
<dbReference type="KEGG" id="ecz:ECS88_0040"/>
<dbReference type="HOGENOM" id="CLU_000022_59_0_6"/>
<dbReference type="UniPathway" id="UPA00117"/>
<dbReference type="Proteomes" id="UP000000747">
    <property type="component" value="Chromosome"/>
</dbReference>
<dbReference type="GO" id="GO:0051108">
    <property type="term" value="F:carnitine-CoA ligase activity"/>
    <property type="evidence" value="ECO:0007669"/>
    <property type="project" value="InterPro"/>
</dbReference>
<dbReference type="GO" id="GO:0051109">
    <property type="term" value="F:crotonobetaine-CoA ligase activity"/>
    <property type="evidence" value="ECO:0007669"/>
    <property type="project" value="InterPro"/>
</dbReference>
<dbReference type="GO" id="GO:0031956">
    <property type="term" value="F:medium-chain fatty acid-CoA ligase activity"/>
    <property type="evidence" value="ECO:0007669"/>
    <property type="project" value="TreeGrafter"/>
</dbReference>
<dbReference type="GO" id="GO:0009437">
    <property type="term" value="P:carnitine metabolic process"/>
    <property type="evidence" value="ECO:0007669"/>
    <property type="project" value="UniProtKB-UniRule"/>
</dbReference>
<dbReference type="GO" id="GO:0006631">
    <property type="term" value="P:fatty acid metabolic process"/>
    <property type="evidence" value="ECO:0007669"/>
    <property type="project" value="TreeGrafter"/>
</dbReference>
<dbReference type="CDD" id="cd05934">
    <property type="entry name" value="FACL_DitJ_like"/>
    <property type="match status" value="1"/>
</dbReference>
<dbReference type="FunFam" id="3.30.300.30:FF:000011">
    <property type="entry name" value="Crotonobetaine/carnitine--CoA ligase"/>
    <property type="match status" value="1"/>
</dbReference>
<dbReference type="FunFam" id="3.40.50.12780:FF:000017">
    <property type="entry name" value="Crotonobetaine/carnitine--CoA ligase"/>
    <property type="match status" value="1"/>
</dbReference>
<dbReference type="Gene3D" id="3.30.300.30">
    <property type="match status" value="1"/>
</dbReference>
<dbReference type="Gene3D" id="3.40.50.12780">
    <property type="entry name" value="N-terminal domain of ligase-like"/>
    <property type="match status" value="1"/>
</dbReference>
<dbReference type="HAMAP" id="MF_01524">
    <property type="entry name" value="CaiC"/>
    <property type="match status" value="1"/>
</dbReference>
<dbReference type="InterPro" id="IPR025110">
    <property type="entry name" value="AMP-bd_C"/>
</dbReference>
<dbReference type="InterPro" id="IPR045851">
    <property type="entry name" value="AMP-bd_C_sf"/>
</dbReference>
<dbReference type="InterPro" id="IPR020845">
    <property type="entry name" value="AMP-binding_CS"/>
</dbReference>
<dbReference type="InterPro" id="IPR000873">
    <property type="entry name" value="AMP-dep_synth/lig_dom"/>
</dbReference>
<dbReference type="InterPro" id="IPR042099">
    <property type="entry name" value="ANL_N_sf"/>
</dbReference>
<dbReference type="InterPro" id="IPR023456">
    <property type="entry name" value="CaiC"/>
</dbReference>
<dbReference type="NCBIfam" id="NF005947">
    <property type="entry name" value="PRK08008.1"/>
    <property type="match status" value="1"/>
</dbReference>
<dbReference type="PANTHER" id="PTHR43201">
    <property type="entry name" value="ACYL-COA SYNTHETASE"/>
    <property type="match status" value="1"/>
</dbReference>
<dbReference type="PANTHER" id="PTHR43201:SF5">
    <property type="entry name" value="MEDIUM-CHAIN ACYL-COA LIGASE ACSF2, MITOCHONDRIAL"/>
    <property type="match status" value="1"/>
</dbReference>
<dbReference type="Pfam" id="PF00501">
    <property type="entry name" value="AMP-binding"/>
    <property type="match status" value="1"/>
</dbReference>
<dbReference type="Pfam" id="PF13193">
    <property type="entry name" value="AMP-binding_C"/>
    <property type="match status" value="1"/>
</dbReference>
<dbReference type="SUPFAM" id="SSF56801">
    <property type="entry name" value="Acetyl-CoA synthetase-like"/>
    <property type="match status" value="1"/>
</dbReference>
<dbReference type="PROSITE" id="PS00455">
    <property type="entry name" value="AMP_BINDING"/>
    <property type="match status" value="1"/>
</dbReference>
<organism>
    <name type="scientific">Escherichia coli O45:K1 (strain S88 / ExPEC)</name>
    <dbReference type="NCBI Taxonomy" id="585035"/>
    <lineage>
        <taxon>Bacteria</taxon>
        <taxon>Pseudomonadati</taxon>
        <taxon>Pseudomonadota</taxon>
        <taxon>Gammaproteobacteria</taxon>
        <taxon>Enterobacterales</taxon>
        <taxon>Enterobacteriaceae</taxon>
        <taxon>Escherichia</taxon>
    </lineage>
</organism>
<reference key="1">
    <citation type="journal article" date="2009" name="PLoS Genet.">
        <title>Organised genome dynamics in the Escherichia coli species results in highly diverse adaptive paths.</title>
        <authorList>
            <person name="Touchon M."/>
            <person name="Hoede C."/>
            <person name="Tenaillon O."/>
            <person name="Barbe V."/>
            <person name="Baeriswyl S."/>
            <person name="Bidet P."/>
            <person name="Bingen E."/>
            <person name="Bonacorsi S."/>
            <person name="Bouchier C."/>
            <person name="Bouvet O."/>
            <person name="Calteau A."/>
            <person name="Chiapello H."/>
            <person name="Clermont O."/>
            <person name="Cruveiller S."/>
            <person name="Danchin A."/>
            <person name="Diard M."/>
            <person name="Dossat C."/>
            <person name="Karoui M.E."/>
            <person name="Frapy E."/>
            <person name="Garry L."/>
            <person name="Ghigo J.M."/>
            <person name="Gilles A.M."/>
            <person name="Johnson J."/>
            <person name="Le Bouguenec C."/>
            <person name="Lescat M."/>
            <person name="Mangenot S."/>
            <person name="Martinez-Jehanne V."/>
            <person name="Matic I."/>
            <person name="Nassif X."/>
            <person name="Oztas S."/>
            <person name="Petit M.A."/>
            <person name="Pichon C."/>
            <person name="Rouy Z."/>
            <person name="Ruf C.S."/>
            <person name="Schneider D."/>
            <person name="Tourret J."/>
            <person name="Vacherie B."/>
            <person name="Vallenet D."/>
            <person name="Medigue C."/>
            <person name="Rocha E.P.C."/>
            <person name="Denamur E."/>
        </authorList>
    </citation>
    <scope>NUCLEOTIDE SEQUENCE [LARGE SCALE GENOMIC DNA]</scope>
    <source>
        <strain>S88 / ExPEC</strain>
    </source>
</reference>
<protein>
    <recommendedName>
        <fullName evidence="1">Crotonobetaine/carnitine--CoA ligase</fullName>
        <ecNumber evidence="1">6.2.1.48</ecNumber>
    </recommendedName>
</protein>
<name>CAIC_ECO45</name>